<reference key="1">
    <citation type="journal article" date="2004" name="Genome Res.">
        <title>The status, quality, and expansion of the NIH full-length cDNA project: the Mammalian Gene Collection (MGC).</title>
        <authorList>
            <consortium name="The MGC Project Team"/>
        </authorList>
    </citation>
    <scope>NUCLEOTIDE SEQUENCE [LARGE SCALE MRNA]</scope>
    <source>
        <tissue>Prostate</tissue>
    </source>
</reference>
<reference key="2">
    <citation type="submission" date="2006-11" db="UniProtKB">
        <authorList>
            <person name="Lubec G."/>
            <person name="Afjehi-Sadat L."/>
        </authorList>
    </citation>
    <scope>PROTEIN SEQUENCE OF 56-67 AND 87-109</scope>
    <scope>IDENTIFICATION BY MASS SPECTROMETRY</scope>
    <source>
        <strain>Sprague-Dawley</strain>
        <tissue>Spinal cord</tissue>
    </source>
</reference>
<reference key="3">
    <citation type="journal article" date="2008" name="Brain Res.">
        <title>Insights on eukaryotic translation initiation factor 5A (eIF5A) in the brain and aging.</title>
        <authorList>
            <person name="Luchessi A.D."/>
            <person name="Cambiaghi T.D."/>
            <person name="Alves A.S."/>
            <person name="Parreiras-E-Silva L.T."/>
            <person name="Britto L.R.G."/>
            <person name="Costa-Neto C.M."/>
            <person name="Curi R."/>
        </authorList>
    </citation>
    <scope>FUNCTION</scope>
</reference>
<reference key="4">
    <citation type="journal article" date="2009" name="J. Cell. Physiol.">
        <title>Involvement of eukaryotic translation initiation factor 5A (eIF5A) in skeletal muscle stem cell differentiation.</title>
        <authorList>
            <person name="Luchessi A.D."/>
            <person name="Cambiaghi T.D."/>
            <person name="Hirabara S.M."/>
            <person name="Lambertucci R.H."/>
            <person name="Silveira L.R."/>
            <person name="Baptista I.L."/>
            <person name="Moriscot A.S."/>
            <person name="Costa-Neto C.M."/>
            <person name="Curi R."/>
        </authorList>
    </citation>
    <scope>FUNCTION</scope>
</reference>
<gene>
    <name evidence="8" type="primary">Eif5a</name>
</gene>
<keyword id="KW-0007">Acetylation</keyword>
<keyword id="KW-0963">Cytoplasm</keyword>
<keyword id="KW-0903">Direct protein sequencing</keyword>
<keyword id="KW-0251">Elongation factor</keyword>
<keyword id="KW-0256">Endoplasmic reticulum</keyword>
<keyword id="KW-0385">Hypusine</keyword>
<keyword id="KW-0472">Membrane</keyword>
<keyword id="KW-0539">Nucleus</keyword>
<keyword id="KW-0648">Protein biosynthesis</keyword>
<keyword id="KW-1185">Reference proteome</keyword>
<keyword id="KW-0694">RNA-binding</keyword>
<dbReference type="EMBL" id="BC101891">
    <property type="protein sequence ID" value="AAI01892.1"/>
    <property type="molecule type" value="mRNA"/>
</dbReference>
<dbReference type="RefSeq" id="NP_001028853.1">
    <property type="nucleotide sequence ID" value="NM_001033681.2"/>
</dbReference>
<dbReference type="RefSeq" id="XP_006246699.1">
    <property type="nucleotide sequence ID" value="XM_006246637.5"/>
</dbReference>
<dbReference type="RefSeq" id="XP_006246700.1">
    <property type="nucleotide sequence ID" value="XM_006246638.3"/>
</dbReference>
<dbReference type="RefSeq" id="XP_038941389.1">
    <property type="nucleotide sequence ID" value="XM_039085461.2"/>
</dbReference>
<dbReference type="BMRB" id="Q3T1J1"/>
<dbReference type="SMR" id="Q3T1J1"/>
<dbReference type="BioGRID" id="252165">
    <property type="interactions" value="4"/>
</dbReference>
<dbReference type="FunCoup" id="Q3T1J1">
    <property type="interactions" value="2478"/>
</dbReference>
<dbReference type="IntAct" id="Q3T1J1">
    <property type="interactions" value="3"/>
</dbReference>
<dbReference type="STRING" id="10116.ENSRNOP00000022343"/>
<dbReference type="iPTMnet" id="Q3T1J1"/>
<dbReference type="PhosphoSitePlus" id="Q3T1J1"/>
<dbReference type="SwissPalm" id="Q3T1J1"/>
<dbReference type="jPOST" id="Q3T1J1"/>
<dbReference type="PaxDb" id="10116-ENSRNOP00000022343"/>
<dbReference type="Ensembl" id="ENSRNOT00000114161.1">
    <property type="protein sequence ID" value="ENSRNOP00000089068.1"/>
    <property type="gene ID" value="ENSRNOG00000016478.8"/>
</dbReference>
<dbReference type="GeneID" id="287444"/>
<dbReference type="KEGG" id="rno:287444"/>
<dbReference type="UCSC" id="RGD:1308029">
    <property type="organism name" value="rat"/>
</dbReference>
<dbReference type="AGR" id="RGD:1308029"/>
<dbReference type="CTD" id="1984"/>
<dbReference type="RGD" id="1308029">
    <property type="gene designation" value="Eif5a"/>
</dbReference>
<dbReference type="eggNOG" id="KOG3271">
    <property type="taxonomic scope" value="Eukaryota"/>
</dbReference>
<dbReference type="GeneTree" id="ENSGT00390000003738"/>
<dbReference type="HOGENOM" id="CLU_102600_0_0_1"/>
<dbReference type="InParanoid" id="Q3T1J1"/>
<dbReference type="OrthoDB" id="9975114at2759"/>
<dbReference type="PhylomeDB" id="Q3T1J1"/>
<dbReference type="TreeFam" id="TF101534"/>
<dbReference type="Reactome" id="R-RNO-204626">
    <property type="pathway name" value="Hypusine synthesis from eIF5A-lysine"/>
</dbReference>
<dbReference type="PRO" id="PR:Q3T1J1"/>
<dbReference type="Proteomes" id="UP000002494">
    <property type="component" value="Chromosome 10"/>
</dbReference>
<dbReference type="Bgee" id="ENSRNOG00000016478">
    <property type="expression patterns" value="Expressed in thymus and 19 other cell types or tissues"/>
</dbReference>
<dbReference type="GO" id="GO:0005642">
    <property type="term" value="C:annulate lamellae"/>
    <property type="evidence" value="ECO:0000266"/>
    <property type="project" value="RGD"/>
</dbReference>
<dbReference type="GO" id="GO:0005737">
    <property type="term" value="C:cytoplasm"/>
    <property type="evidence" value="ECO:0000266"/>
    <property type="project" value="RGD"/>
</dbReference>
<dbReference type="GO" id="GO:0030425">
    <property type="term" value="C:dendrite"/>
    <property type="evidence" value="ECO:0000314"/>
    <property type="project" value="RGD"/>
</dbReference>
<dbReference type="GO" id="GO:0005789">
    <property type="term" value="C:endoplasmic reticulum membrane"/>
    <property type="evidence" value="ECO:0007669"/>
    <property type="project" value="UniProtKB-SubCell"/>
</dbReference>
<dbReference type="GO" id="GO:0043025">
    <property type="term" value="C:neuronal cell body"/>
    <property type="evidence" value="ECO:0000314"/>
    <property type="project" value="RGD"/>
</dbReference>
<dbReference type="GO" id="GO:0005643">
    <property type="term" value="C:nuclear pore"/>
    <property type="evidence" value="ECO:0000266"/>
    <property type="project" value="RGD"/>
</dbReference>
<dbReference type="GO" id="GO:0005634">
    <property type="term" value="C:nucleus"/>
    <property type="evidence" value="ECO:0000266"/>
    <property type="project" value="RGD"/>
</dbReference>
<dbReference type="GO" id="GO:0045202">
    <property type="term" value="C:synapse"/>
    <property type="evidence" value="ECO:0000314"/>
    <property type="project" value="SynGO"/>
</dbReference>
<dbReference type="GO" id="GO:0043022">
    <property type="term" value="F:ribosome binding"/>
    <property type="evidence" value="ECO:0007669"/>
    <property type="project" value="InterPro"/>
</dbReference>
<dbReference type="GO" id="GO:0003723">
    <property type="term" value="F:RNA binding"/>
    <property type="evidence" value="ECO:0000266"/>
    <property type="project" value="RGD"/>
</dbReference>
<dbReference type="GO" id="GO:0003746">
    <property type="term" value="F:translation elongation factor activity"/>
    <property type="evidence" value="ECO:0000318"/>
    <property type="project" value="GO_Central"/>
</dbReference>
<dbReference type="GO" id="GO:0017070">
    <property type="term" value="F:U6 snRNA binding"/>
    <property type="evidence" value="ECO:0000266"/>
    <property type="project" value="RGD"/>
</dbReference>
<dbReference type="GO" id="GO:0097067">
    <property type="term" value="P:cellular response to thyroid hormone stimulus"/>
    <property type="evidence" value="ECO:0000270"/>
    <property type="project" value="RGD"/>
</dbReference>
<dbReference type="GO" id="GO:0098586">
    <property type="term" value="P:cellular response to virus"/>
    <property type="evidence" value="ECO:0000266"/>
    <property type="project" value="RGD"/>
</dbReference>
<dbReference type="GO" id="GO:0043066">
    <property type="term" value="P:negative regulation of apoptotic process"/>
    <property type="evidence" value="ECO:0000315"/>
    <property type="project" value="RGD"/>
</dbReference>
<dbReference type="GO" id="GO:0043065">
    <property type="term" value="P:positive regulation of apoptotic process"/>
    <property type="evidence" value="ECO:0000266"/>
    <property type="project" value="RGD"/>
</dbReference>
<dbReference type="GO" id="GO:0010666">
    <property type="term" value="P:positive regulation of cardiac muscle cell apoptotic process"/>
    <property type="evidence" value="ECO:0000315"/>
    <property type="project" value="RGD"/>
</dbReference>
<dbReference type="GO" id="GO:0007204">
    <property type="term" value="P:positive regulation of cytosolic calcium ion concentration"/>
    <property type="evidence" value="ECO:0000315"/>
    <property type="project" value="RGD"/>
</dbReference>
<dbReference type="GO" id="GO:1902255">
    <property type="term" value="P:positive regulation of intrinsic apoptotic signaling pathway by p53 class mediator"/>
    <property type="evidence" value="ECO:0000266"/>
    <property type="project" value="RGD"/>
</dbReference>
<dbReference type="GO" id="GO:0051149">
    <property type="term" value="P:positive regulation of muscle cell differentiation"/>
    <property type="evidence" value="ECO:0000315"/>
    <property type="project" value="RGD"/>
</dbReference>
<dbReference type="GO" id="GO:2000379">
    <property type="term" value="P:positive regulation of reactive oxygen species metabolic process"/>
    <property type="evidence" value="ECO:0000315"/>
    <property type="project" value="RGD"/>
</dbReference>
<dbReference type="GO" id="GO:0045944">
    <property type="term" value="P:positive regulation of transcription by RNA polymerase II"/>
    <property type="evidence" value="ECO:0000266"/>
    <property type="project" value="RGD"/>
</dbReference>
<dbReference type="GO" id="GO:0045901">
    <property type="term" value="P:positive regulation of translational elongation"/>
    <property type="evidence" value="ECO:0007669"/>
    <property type="project" value="InterPro"/>
</dbReference>
<dbReference type="GO" id="GO:0045905">
    <property type="term" value="P:positive regulation of translational termination"/>
    <property type="evidence" value="ECO:0007669"/>
    <property type="project" value="InterPro"/>
</dbReference>
<dbReference type="GO" id="GO:0006414">
    <property type="term" value="P:translational elongation"/>
    <property type="evidence" value="ECO:0000250"/>
    <property type="project" value="UniProtKB"/>
</dbReference>
<dbReference type="GO" id="GO:0033209">
    <property type="term" value="P:tumor necrosis factor-mediated signaling pathway"/>
    <property type="evidence" value="ECO:0000266"/>
    <property type="project" value="RGD"/>
</dbReference>
<dbReference type="CDD" id="cd04468">
    <property type="entry name" value="S1_eIF5A"/>
    <property type="match status" value="1"/>
</dbReference>
<dbReference type="FunFam" id="2.30.30.30:FF:000007">
    <property type="entry name" value="Eukaryotic translation initiation factor 5A"/>
    <property type="match status" value="1"/>
</dbReference>
<dbReference type="FunFam" id="2.40.50.140:FF:000034">
    <property type="entry name" value="Eukaryotic translation initiation factor 5A"/>
    <property type="match status" value="1"/>
</dbReference>
<dbReference type="Gene3D" id="2.30.30.30">
    <property type="match status" value="1"/>
</dbReference>
<dbReference type="Gene3D" id="2.40.50.140">
    <property type="entry name" value="Nucleic acid-binding proteins"/>
    <property type="match status" value="1"/>
</dbReference>
<dbReference type="InterPro" id="IPR001884">
    <property type="entry name" value="IF5A-like"/>
</dbReference>
<dbReference type="InterPro" id="IPR048670">
    <property type="entry name" value="IF5A-like_N"/>
</dbReference>
<dbReference type="InterPro" id="IPR012340">
    <property type="entry name" value="NA-bd_OB-fold"/>
</dbReference>
<dbReference type="InterPro" id="IPR014722">
    <property type="entry name" value="Rib_uL2_dom2"/>
</dbReference>
<dbReference type="InterPro" id="IPR019769">
    <property type="entry name" value="Trans_elong_IF5A_hypusine_site"/>
</dbReference>
<dbReference type="InterPro" id="IPR020189">
    <property type="entry name" value="Transl_elong_IF5A_C"/>
</dbReference>
<dbReference type="InterPro" id="IPR008991">
    <property type="entry name" value="Translation_prot_SH3-like_sf"/>
</dbReference>
<dbReference type="NCBIfam" id="TIGR00037">
    <property type="entry name" value="eIF_5A"/>
    <property type="match status" value="1"/>
</dbReference>
<dbReference type="PANTHER" id="PTHR11673">
    <property type="entry name" value="TRANSLATION INITIATION FACTOR 5A FAMILY MEMBER"/>
    <property type="match status" value="1"/>
</dbReference>
<dbReference type="Pfam" id="PF01287">
    <property type="entry name" value="eIF-5a"/>
    <property type="match status" value="1"/>
</dbReference>
<dbReference type="Pfam" id="PF21485">
    <property type="entry name" value="IF5A-like_N"/>
    <property type="match status" value="1"/>
</dbReference>
<dbReference type="PIRSF" id="PIRSF003025">
    <property type="entry name" value="eIF5A"/>
    <property type="match status" value="1"/>
</dbReference>
<dbReference type="SMART" id="SM01376">
    <property type="entry name" value="eIF-5a"/>
    <property type="match status" value="1"/>
</dbReference>
<dbReference type="SUPFAM" id="SSF50249">
    <property type="entry name" value="Nucleic acid-binding proteins"/>
    <property type="match status" value="1"/>
</dbReference>
<dbReference type="SUPFAM" id="SSF50104">
    <property type="entry name" value="Translation proteins SH3-like domain"/>
    <property type="match status" value="1"/>
</dbReference>
<dbReference type="PROSITE" id="PS00302">
    <property type="entry name" value="IF5A_HYPUSINE"/>
    <property type="match status" value="1"/>
</dbReference>
<evidence type="ECO:0000250" key="1">
    <source>
        <dbReference type="UniProtKB" id="P23301"/>
    </source>
</evidence>
<evidence type="ECO:0000250" key="2">
    <source>
        <dbReference type="UniProtKB" id="P63241"/>
    </source>
</evidence>
<evidence type="ECO:0000250" key="3">
    <source>
        <dbReference type="UniProtKB" id="P63242"/>
    </source>
</evidence>
<evidence type="ECO:0000250" key="4">
    <source>
        <dbReference type="UniProtKB" id="Q6NX89"/>
    </source>
</evidence>
<evidence type="ECO:0000269" key="5">
    <source>
    </source>
</evidence>
<evidence type="ECO:0000269" key="6">
    <source>
    </source>
</evidence>
<evidence type="ECO:0000305" key="7"/>
<evidence type="ECO:0000312" key="8">
    <source>
        <dbReference type="RGD" id="1308029"/>
    </source>
</evidence>
<accession>Q3T1J1</accession>
<proteinExistence type="evidence at protein level"/>
<comment type="function">
    <text evidence="1 2 5 6">Translation factor that promotes translation elongation and termination, particularly upon ribosome stalling at specific amino acid sequence contexts (By similarity). Binds between the exit (E) and peptidyl (P) site of the ribosome and promotes rescue of stalled ribosome: specifically required for efficient translation of polyproline-containing peptides as well as other motifs that stall the ribosome. Acts as a ribosome quality control (RQC) cofactor by joining the RQC complex to facilitate peptidyl transfer during CAT tailing step (By similarity). Also involved in actin dynamics and cell cycle progression, mRNA decay and probably in a pathway involved in stress response and maintenance of cell wall integrity. With syntenin SDCBP, functions as a regulator of p53/TP53 and p53/TP53-dependent apoptosis. Also regulates TNF-alpha-mediated apoptosis. Mediates effects of polyamines on neuronal process extension and survival (By similarity). May play an important role in brain development and function, and in skeletal muscle stem cell differentiation (PubMed:18606156, PubMed:19006180). Is required for autophagy by assisting the ribosome in translating the ATG3 protein at a specific amino acid sequence, the 'ASP-ASP-Gly' motif, leading to the increase of the efficiency of ATG3 translation and facilitation of LC3B lipidation and autophagosome formation (By similarity).</text>
</comment>
<comment type="subunit">
    <text evidence="2 4">Binds to 80S ribosomes. Actively translating ribosomes show mutually exclusive binding of eIF5a (EIF5A or EIF5A2) and EEF2/eEF2 (By similarity). Interacts with DAPL1; interaction takes place at the polypeptide exit tunnel of hibernating ribosomes and prevents translation (By similarity). Interacts with DHPS. Interacts with SDCBP. Interacts with DOHH (By similarity).</text>
</comment>
<comment type="subcellular location">
    <subcellularLocation>
        <location evidence="2">Cytoplasm</location>
    </subcellularLocation>
    <subcellularLocation>
        <location evidence="2">Nucleus</location>
    </subcellularLocation>
    <subcellularLocation>
        <location evidence="2">Endoplasmic reticulum membrane</location>
        <topology evidence="2">Peripheral membrane protein</topology>
        <orientation evidence="2">Cytoplasmic side</orientation>
    </subcellularLocation>
    <text evidence="2">Hypusine modification promotes the nuclear export and cytoplasmic localization and there was a dynamic shift in the localization from predominantly cytoplasmic to primarily nuclear under apoptotic inducing conditions. Nuclear export of hypusinated protein is mediated by XPO4.</text>
</comment>
<comment type="PTM">
    <text evidence="2">Acetylated by PCAF/KAT2B, regulating its subcellular localization (By similarity). Deacetylated by SIRT2 (By similarity).</text>
</comment>
<comment type="PTM">
    <text evidence="2">Lys-50 undergoes hypusination, a unique post-translational modification that consists in the addition of a butylamino group from spermidine to lysine side chain, leading to the formation of the unusual amino acid hypusine. eIF-5As are the only known proteins to undergo this modification, which is essential for their function.</text>
</comment>
<comment type="similarity">
    <text evidence="7">Belongs to the eIF-5A family.</text>
</comment>
<organism>
    <name type="scientific">Rattus norvegicus</name>
    <name type="common">Rat</name>
    <dbReference type="NCBI Taxonomy" id="10116"/>
    <lineage>
        <taxon>Eukaryota</taxon>
        <taxon>Metazoa</taxon>
        <taxon>Chordata</taxon>
        <taxon>Craniata</taxon>
        <taxon>Vertebrata</taxon>
        <taxon>Euteleostomi</taxon>
        <taxon>Mammalia</taxon>
        <taxon>Eutheria</taxon>
        <taxon>Euarchontoglires</taxon>
        <taxon>Glires</taxon>
        <taxon>Rodentia</taxon>
        <taxon>Myomorpha</taxon>
        <taxon>Muroidea</taxon>
        <taxon>Muridae</taxon>
        <taxon>Murinae</taxon>
        <taxon>Rattus</taxon>
    </lineage>
</organism>
<sequence length="154" mass="16832">MADDLDFETGDAGASATFPMQCSALRKNGFVVLKGRPCKIVEMSTSKTGKHGHAKVHLVGIDIFTGKKYEDICPSTHNMDVPNIKRNDFQLIGIQDGYLSLLQDSGEVREDLRLPEGDLGKEIEQKYDCGEEILITVLSAMTEEAAVAIKAMAK</sequence>
<name>IF5A1_RAT</name>
<feature type="initiator methionine" description="Removed" evidence="2">
    <location>
        <position position="1"/>
    </location>
</feature>
<feature type="chain" id="PRO_0000229763" description="Eukaryotic translation initiation factor 5A-1">
    <location>
        <begin position="2"/>
        <end position="154"/>
    </location>
</feature>
<feature type="modified residue" description="N-acetylalanine" evidence="2">
    <location>
        <position position="2"/>
    </location>
</feature>
<feature type="modified residue" description="N6-acetyllysine" evidence="2">
    <location>
        <position position="47"/>
    </location>
</feature>
<feature type="modified residue" description="Hypusine" evidence="2">
    <location>
        <position position="50"/>
    </location>
</feature>
<feature type="modified residue" description="N6-acetyllysine" evidence="3">
    <location>
        <position position="121"/>
    </location>
</feature>
<protein>
    <recommendedName>
        <fullName evidence="7">Eukaryotic translation initiation factor 5A-1</fullName>
        <shortName>eIF-5A-1</shortName>
        <shortName>eIF-5A1</shortName>
    </recommendedName>
    <alternativeName>
        <fullName>Eukaryotic initiation factor 5A isoform 1</fullName>
        <shortName>eIF-5A</shortName>
    </alternativeName>
    <alternativeName>
        <fullName>eIF-4D</fullName>
    </alternativeName>
</protein>